<comment type="function">
    <text evidence="1">Involved in the biosynthesis of branched-chain amino acids (BCAA). Catalyzes an alkyl-migration followed by a ketol-acid reduction of (S)-2-acetolactate (S2AL) to yield (R)-2,3-dihydroxy-isovalerate. In the isomerase reaction, S2AL is rearranged via a Mg-dependent methyl migration to produce 3-hydroxy-3-methyl-2-ketobutyrate (HMKB). In the reductase reaction, this 2-ketoacid undergoes a metal-dependent reduction by NADPH to yield (R)-2,3-dihydroxy-isovalerate.</text>
</comment>
<comment type="catalytic activity">
    <reaction evidence="1">
        <text>(2R)-2,3-dihydroxy-3-methylbutanoate + NADP(+) = (2S)-2-acetolactate + NADPH + H(+)</text>
        <dbReference type="Rhea" id="RHEA:22068"/>
        <dbReference type="ChEBI" id="CHEBI:15378"/>
        <dbReference type="ChEBI" id="CHEBI:49072"/>
        <dbReference type="ChEBI" id="CHEBI:57783"/>
        <dbReference type="ChEBI" id="CHEBI:58349"/>
        <dbReference type="ChEBI" id="CHEBI:58476"/>
        <dbReference type="EC" id="1.1.1.86"/>
    </reaction>
</comment>
<comment type="catalytic activity">
    <reaction evidence="1">
        <text>(2R,3R)-2,3-dihydroxy-3-methylpentanoate + NADP(+) = (S)-2-ethyl-2-hydroxy-3-oxobutanoate + NADPH + H(+)</text>
        <dbReference type="Rhea" id="RHEA:13493"/>
        <dbReference type="ChEBI" id="CHEBI:15378"/>
        <dbReference type="ChEBI" id="CHEBI:49256"/>
        <dbReference type="ChEBI" id="CHEBI:49258"/>
        <dbReference type="ChEBI" id="CHEBI:57783"/>
        <dbReference type="ChEBI" id="CHEBI:58349"/>
        <dbReference type="EC" id="1.1.1.86"/>
    </reaction>
</comment>
<comment type="cofactor">
    <cofactor evidence="1">
        <name>Mg(2+)</name>
        <dbReference type="ChEBI" id="CHEBI:18420"/>
    </cofactor>
    <text evidence="1">Binds 2 magnesium ions per subunit.</text>
</comment>
<comment type="pathway">
    <text evidence="1">Amino-acid biosynthesis; L-isoleucine biosynthesis; L-isoleucine from 2-oxobutanoate: step 2/4.</text>
</comment>
<comment type="pathway">
    <text evidence="1">Amino-acid biosynthesis; L-valine biosynthesis; L-valine from pyruvate: step 2/4.</text>
</comment>
<comment type="similarity">
    <text evidence="1">Belongs to the ketol-acid reductoisomerase family.</text>
</comment>
<proteinExistence type="inferred from homology"/>
<keyword id="KW-0028">Amino-acid biosynthesis</keyword>
<keyword id="KW-0100">Branched-chain amino acid biosynthesis</keyword>
<keyword id="KW-0460">Magnesium</keyword>
<keyword id="KW-0479">Metal-binding</keyword>
<keyword id="KW-0521">NADP</keyword>
<keyword id="KW-0560">Oxidoreductase</keyword>
<keyword id="KW-0677">Repeat</keyword>
<gene>
    <name evidence="1" type="primary">ilvC</name>
    <name type="ordered locus">NTHI0804</name>
</gene>
<protein>
    <recommendedName>
        <fullName evidence="1">Ketol-acid reductoisomerase (NADP(+))</fullName>
        <shortName evidence="1">KARI</shortName>
        <ecNumber evidence="1">1.1.1.86</ecNumber>
    </recommendedName>
    <alternativeName>
        <fullName evidence="1">Acetohydroxy-acid isomeroreductase</fullName>
        <shortName evidence="1">AHIR</shortName>
    </alternativeName>
    <alternativeName>
        <fullName evidence="1">Alpha-keto-beta-hydroxylacyl reductoisomerase</fullName>
    </alternativeName>
    <alternativeName>
        <fullName evidence="1">Ketol-acid reductoisomerase type 2</fullName>
    </alternativeName>
    <alternativeName>
        <fullName evidence="1">Ketol-acid reductoisomerase type II</fullName>
    </alternativeName>
</protein>
<organism>
    <name type="scientific">Haemophilus influenzae (strain 86-028NP)</name>
    <dbReference type="NCBI Taxonomy" id="281310"/>
    <lineage>
        <taxon>Bacteria</taxon>
        <taxon>Pseudomonadati</taxon>
        <taxon>Pseudomonadota</taxon>
        <taxon>Gammaproteobacteria</taxon>
        <taxon>Pasteurellales</taxon>
        <taxon>Pasteurellaceae</taxon>
        <taxon>Haemophilus</taxon>
    </lineage>
</organism>
<evidence type="ECO:0000255" key="1">
    <source>
        <dbReference type="HAMAP-Rule" id="MF_00435"/>
    </source>
</evidence>
<evidence type="ECO:0000255" key="2">
    <source>
        <dbReference type="PROSITE-ProRule" id="PRU01197"/>
    </source>
</evidence>
<evidence type="ECO:0000255" key="3">
    <source>
        <dbReference type="PROSITE-ProRule" id="PRU01198"/>
    </source>
</evidence>
<accession>Q4QMN4</accession>
<reference key="1">
    <citation type="journal article" date="2005" name="J. Bacteriol.">
        <title>Genomic sequence of an otitis media isolate of nontypeable Haemophilus influenzae: comparative study with H. influenzae serotype d, strain KW20.</title>
        <authorList>
            <person name="Harrison A."/>
            <person name="Dyer D.W."/>
            <person name="Gillaspy A."/>
            <person name="Ray W.C."/>
            <person name="Mungur R."/>
            <person name="Carson M.B."/>
            <person name="Zhong H."/>
            <person name="Gipson J."/>
            <person name="Gipson M."/>
            <person name="Johnson L.S."/>
            <person name="Lewis L."/>
            <person name="Bakaletz L.O."/>
            <person name="Munson R.S. Jr."/>
        </authorList>
    </citation>
    <scope>NUCLEOTIDE SEQUENCE [LARGE SCALE GENOMIC DNA]</scope>
    <source>
        <strain>86-028NP</strain>
    </source>
</reference>
<feature type="chain" id="PRO_0000226180" description="Ketol-acid reductoisomerase (NADP(+))">
    <location>
        <begin position="1"/>
        <end position="492"/>
    </location>
</feature>
<feature type="domain" description="KARI N-terminal Rossmann" evidence="2">
    <location>
        <begin position="14"/>
        <end position="208"/>
    </location>
</feature>
<feature type="domain" description="KARI C-terminal knotted 1" evidence="3">
    <location>
        <begin position="209"/>
        <end position="344"/>
    </location>
</feature>
<feature type="domain" description="KARI C-terminal knotted 2" evidence="3">
    <location>
        <begin position="345"/>
        <end position="485"/>
    </location>
</feature>
<feature type="active site" evidence="1">
    <location>
        <position position="132"/>
    </location>
</feature>
<feature type="binding site" evidence="1">
    <location>
        <begin position="45"/>
        <end position="48"/>
    </location>
    <ligand>
        <name>NADP(+)</name>
        <dbReference type="ChEBI" id="CHEBI:58349"/>
    </ligand>
</feature>
<feature type="binding site" evidence="1">
    <location>
        <position position="68"/>
    </location>
    <ligand>
        <name>NADP(+)</name>
        <dbReference type="ChEBI" id="CHEBI:58349"/>
    </ligand>
</feature>
<feature type="binding site" evidence="1">
    <location>
        <position position="76"/>
    </location>
    <ligand>
        <name>NADP(+)</name>
        <dbReference type="ChEBI" id="CHEBI:58349"/>
    </ligand>
</feature>
<feature type="binding site" evidence="1">
    <location>
        <position position="78"/>
    </location>
    <ligand>
        <name>NADP(+)</name>
        <dbReference type="ChEBI" id="CHEBI:58349"/>
    </ligand>
</feature>
<feature type="binding site" evidence="1">
    <location>
        <begin position="108"/>
        <end position="110"/>
    </location>
    <ligand>
        <name>NADP(+)</name>
        <dbReference type="ChEBI" id="CHEBI:58349"/>
    </ligand>
</feature>
<feature type="binding site" evidence="1">
    <location>
        <position position="158"/>
    </location>
    <ligand>
        <name>NADP(+)</name>
        <dbReference type="ChEBI" id="CHEBI:58349"/>
    </ligand>
</feature>
<feature type="binding site" evidence="1">
    <location>
        <position position="217"/>
    </location>
    <ligand>
        <name>Mg(2+)</name>
        <dbReference type="ChEBI" id="CHEBI:18420"/>
        <label>1</label>
    </ligand>
</feature>
<feature type="binding site" evidence="1">
    <location>
        <position position="217"/>
    </location>
    <ligand>
        <name>Mg(2+)</name>
        <dbReference type="ChEBI" id="CHEBI:18420"/>
        <label>2</label>
    </ligand>
</feature>
<feature type="binding site" evidence="1">
    <location>
        <position position="221"/>
    </location>
    <ligand>
        <name>Mg(2+)</name>
        <dbReference type="ChEBI" id="CHEBI:18420"/>
        <label>1</label>
    </ligand>
</feature>
<feature type="binding site" evidence="1">
    <location>
        <position position="389"/>
    </location>
    <ligand>
        <name>Mg(2+)</name>
        <dbReference type="ChEBI" id="CHEBI:18420"/>
        <label>2</label>
    </ligand>
</feature>
<feature type="binding site" evidence="1">
    <location>
        <position position="393"/>
    </location>
    <ligand>
        <name>Mg(2+)</name>
        <dbReference type="ChEBI" id="CHEBI:18420"/>
        <label>2</label>
    </ligand>
</feature>
<feature type="binding site" evidence="1">
    <location>
        <position position="414"/>
    </location>
    <ligand>
        <name>substrate</name>
    </ligand>
</feature>
<name>ILVC_HAEI8</name>
<dbReference type="EC" id="1.1.1.86" evidence="1"/>
<dbReference type="EMBL" id="CP000057">
    <property type="protein sequence ID" value="AAX87713.1"/>
    <property type="molecule type" value="Genomic_DNA"/>
</dbReference>
<dbReference type="RefSeq" id="WP_011272166.1">
    <property type="nucleotide sequence ID" value="NC_007146.2"/>
</dbReference>
<dbReference type="SMR" id="Q4QMN4"/>
<dbReference type="KEGG" id="hit:NTHI0804"/>
<dbReference type="HOGENOM" id="CLU_551905_0_0_6"/>
<dbReference type="UniPathway" id="UPA00047">
    <property type="reaction ID" value="UER00056"/>
</dbReference>
<dbReference type="UniPathway" id="UPA00049">
    <property type="reaction ID" value="UER00060"/>
</dbReference>
<dbReference type="Proteomes" id="UP000002525">
    <property type="component" value="Chromosome"/>
</dbReference>
<dbReference type="GO" id="GO:0005829">
    <property type="term" value="C:cytosol"/>
    <property type="evidence" value="ECO:0007669"/>
    <property type="project" value="TreeGrafter"/>
</dbReference>
<dbReference type="GO" id="GO:0004455">
    <property type="term" value="F:ketol-acid reductoisomerase activity"/>
    <property type="evidence" value="ECO:0007669"/>
    <property type="project" value="UniProtKB-UniRule"/>
</dbReference>
<dbReference type="GO" id="GO:0000287">
    <property type="term" value="F:magnesium ion binding"/>
    <property type="evidence" value="ECO:0007669"/>
    <property type="project" value="UniProtKB-UniRule"/>
</dbReference>
<dbReference type="GO" id="GO:0009097">
    <property type="term" value="P:isoleucine biosynthetic process"/>
    <property type="evidence" value="ECO:0007669"/>
    <property type="project" value="UniProtKB-UniRule"/>
</dbReference>
<dbReference type="GO" id="GO:0009099">
    <property type="term" value="P:L-valine biosynthetic process"/>
    <property type="evidence" value="ECO:0007669"/>
    <property type="project" value="UniProtKB-UniRule"/>
</dbReference>
<dbReference type="FunFam" id="1.10.1040.10:FF:000007">
    <property type="entry name" value="Ketol-acid reductoisomerase (NADP(+))"/>
    <property type="match status" value="1"/>
</dbReference>
<dbReference type="FunFam" id="3.40.50.720:FF:000043">
    <property type="entry name" value="Ketol-acid reductoisomerase (NADP(+))"/>
    <property type="match status" value="1"/>
</dbReference>
<dbReference type="Gene3D" id="1.10.1040.10">
    <property type="entry name" value="N-(1-d-carboxylethyl)-l-norvaline Dehydrogenase, domain 2"/>
    <property type="match status" value="1"/>
</dbReference>
<dbReference type="Gene3D" id="3.40.50.720">
    <property type="entry name" value="NAD(P)-binding Rossmann-like Domain"/>
    <property type="match status" value="1"/>
</dbReference>
<dbReference type="HAMAP" id="MF_00435">
    <property type="entry name" value="IlvC"/>
    <property type="match status" value="1"/>
</dbReference>
<dbReference type="InterPro" id="IPR008927">
    <property type="entry name" value="6-PGluconate_DH-like_C_sf"/>
</dbReference>
<dbReference type="InterPro" id="IPR013328">
    <property type="entry name" value="6PGD_dom2"/>
</dbReference>
<dbReference type="InterPro" id="IPR013023">
    <property type="entry name" value="KARI"/>
</dbReference>
<dbReference type="InterPro" id="IPR000506">
    <property type="entry name" value="KARI_C"/>
</dbReference>
<dbReference type="InterPro" id="IPR013116">
    <property type="entry name" value="KARI_N"/>
</dbReference>
<dbReference type="InterPro" id="IPR036291">
    <property type="entry name" value="NAD(P)-bd_dom_sf"/>
</dbReference>
<dbReference type="NCBIfam" id="TIGR00465">
    <property type="entry name" value="ilvC"/>
    <property type="match status" value="1"/>
</dbReference>
<dbReference type="NCBIfam" id="NF003557">
    <property type="entry name" value="PRK05225.1"/>
    <property type="match status" value="1"/>
</dbReference>
<dbReference type="PANTHER" id="PTHR21371">
    <property type="entry name" value="KETOL-ACID REDUCTOISOMERASE, MITOCHONDRIAL"/>
    <property type="match status" value="1"/>
</dbReference>
<dbReference type="PANTHER" id="PTHR21371:SF1">
    <property type="entry name" value="KETOL-ACID REDUCTOISOMERASE, MITOCHONDRIAL"/>
    <property type="match status" value="1"/>
</dbReference>
<dbReference type="Pfam" id="PF01450">
    <property type="entry name" value="KARI_C"/>
    <property type="match status" value="2"/>
</dbReference>
<dbReference type="Pfam" id="PF07991">
    <property type="entry name" value="KARI_N"/>
    <property type="match status" value="1"/>
</dbReference>
<dbReference type="SUPFAM" id="SSF48179">
    <property type="entry name" value="6-phosphogluconate dehydrogenase C-terminal domain-like"/>
    <property type="match status" value="2"/>
</dbReference>
<dbReference type="SUPFAM" id="SSF51735">
    <property type="entry name" value="NAD(P)-binding Rossmann-fold domains"/>
    <property type="match status" value="1"/>
</dbReference>
<dbReference type="PROSITE" id="PS51851">
    <property type="entry name" value="KARI_C"/>
    <property type="match status" value="2"/>
</dbReference>
<dbReference type="PROSITE" id="PS51850">
    <property type="entry name" value="KARI_N"/>
    <property type="match status" value="1"/>
</dbReference>
<sequence>MANYFNTLNLRQKLDQLGRCRFMDREEFADEANFLKGKKIVIVGCGAQGLNQGLNMRDSGLDISYALRPEAIAEKRASFQRATENGFKVGTYEELIPTADLVVNLTPDKQHSKVVADVMPLMKKDSAFGYSHGFNIVEVGEEIRKDITVVMVAPKCPGTEVREEYKRGFGVPTLIAVHPENDPKGEGLAIAKAWAAATGGHKAGVLESSFVAEVKSDLMGEQTILCGMLQAGSIVCYDKLVADGKDPAYAGKLIQYGWETITEALKQGGITLMMDRLSNSAKLRAFELAEQIKESLGFLYYKHMDDIISGHFSATMMADWANGDKDLFAWREATGKTAFENAPKYDGKISEQEYFDNGVLMIAMVKAGVELAFDAMVASGIYEESAYYESLHELPLIANTIARKRLYEMNVVISDTAEYGNYLFSNVATPILAKEIIPNLQKGDLGEPTPAVEIDNITLRDVNDAIRNHPVELIGQELRGYMTDMKRIAVAG</sequence>